<keyword id="KW-0032">Aminotransferase</keyword>
<keyword id="KW-0045">Antibiotic biosynthesis</keyword>
<keyword id="KW-0663">Pyridoxal phosphate</keyword>
<keyword id="KW-0808">Transferase</keyword>
<gene>
    <name type="primary">kanD</name>
    <name type="synonym">kanS2</name>
</gene>
<dbReference type="EC" id="2.6.1.101"/>
<dbReference type="EMBL" id="AJ582817">
    <property type="protein sequence ID" value="CAE46943.1"/>
    <property type="molecule type" value="Genomic_DNA"/>
</dbReference>
<dbReference type="EMBL" id="AB164642">
    <property type="protein sequence ID" value="BAD20764.1"/>
    <property type="molecule type" value="Genomic_DNA"/>
</dbReference>
<dbReference type="EMBL" id="AJ628422">
    <property type="protein sequence ID" value="CAF31593.1"/>
    <property type="molecule type" value="Genomic_DNA"/>
</dbReference>
<dbReference type="RefSeq" id="WP_055553810.1">
    <property type="nucleotide sequence ID" value="NZ_CP023699.1"/>
</dbReference>
<dbReference type="SMR" id="Q6L733"/>
<dbReference type="KEGG" id="ag:CAE46943"/>
<dbReference type="OrthoDB" id="9804264at2"/>
<dbReference type="UniPathway" id="UPA00907">
    <property type="reaction ID" value="UER00924"/>
</dbReference>
<dbReference type="UniPathway" id="UPA00965"/>
<dbReference type="GO" id="GO:0030170">
    <property type="term" value="F:pyridoxal phosphate binding"/>
    <property type="evidence" value="ECO:0007669"/>
    <property type="project" value="TreeGrafter"/>
</dbReference>
<dbReference type="GO" id="GO:0008483">
    <property type="term" value="F:transaminase activity"/>
    <property type="evidence" value="ECO:0007669"/>
    <property type="project" value="UniProtKB-KW"/>
</dbReference>
<dbReference type="GO" id="GO:0017000">
    <property type="term" value="P:antibiotic biosynthetic process"/>
    <property type="evidence" value="ECO:0007669"/>
    <property type="project" value="UniProtKB-KW"/>
</dbReference>
<dbReference type="GO" id="GO:0000271">
    <property type="term" value="P:polysaccharide biosynthetic process"/>
    <property type="evidence" value="ECO:0007669"/>
    <property type="project" value="TreeGrafter"/>
</dbReference>
<dbReference type="CDD" id="cd00616">
    <property type="entry name" value="AHBA_syn"/>
    <property type="match status" value="1"/>
</dbReference>
<dbReference type="Gene3D" id="3.90.1150.10">
    <property type="entry name" value="Aspartate Aminotransferase, domain 1"/>
    <property type="match status" value="1"/>
</dbReference>
<dbReference type="Gene3D" id="3.40.640.10">
    <property type="entry name" value="Type I PLP-dependent aspartate aminotransferase-like (Major domain)"/>
    <property type="match status" value="1"/>
</dbReference>
<dbReference type="InterPro" id="IPR000653">
    <property type="entry name" value="DegT/StrS_aminotransferase"/>
</dbReference>
<dbReference type="InterPro" id="IPR015424">
    <property type="entry name" value="PyrdxlP-dep_Trfase"/>
</dbReference>
<dbReference type="InterPro" id="IPR015421">
    <property type="entry name" value="PyrdxlP-dep_Trfase_major"/>
</dbReference>
<dbReference type="InterPro" id="IPR015422">
    <property type="entry name" value="PyrdxlP-dep_Trfase_small"/>
</dbReference>
<dbReference type="PANTHER" id="PTHR30244:SF34">
    <property type="entry name" value="DTDP-4-AMINO-4,6-DIDEOXYGALACTOSE TRANSAMINASE"/>
    <property type="match status" value="1"/>
</dbReference>
<dbReference type="PANTHER" id="PTHR30244">
    <property type="entry name" value="TRANSAMINASE"/>
    <property type="match status" value="1"/>
</dbReference>
<dbReference type="Pfam" id="PF01041">
    <property type="entry name" value="DegT_DnrJ_EryC1"/>
    <property type="match status" value="1"/>
</dbReference>
<dbReference type="PIRSF" id="PIRSF000390">
    <property type="entry name" value="PLP_StrS"/>
    <property type="match status" value="1"/>
</dbReference>
<dbReference type="SUPFAM" id="SSF53383">
    <property type="entry name" value="PLP-dependent transferases"/>
    <property type="match status" value="1"/>
</dbReference>
<evidence type="ECO:0000250" key="1"/>
<evidence type="ECO:0000305" key="2"/>
<accession>Q6L733</accession>
<comment type="function">
    <text evidence="2">Catalyzes the transamination of 3-amino-2,3-dideoxy-scyllo-inosose (amino-DOI) into 2-deoxystreptamine (DOS).</text>
</comment>
<comment type="catalytic activity">
    <reaction>
        <text>3-amino-2,3-dideoxy-scyllo-inosose + L-glutamine = 2-deoxystreptamine + 2-oxoglutaramate</text>
        <dbReference type="Rhea" id="RHEA:34151"/>
        <dbReference type="ChEBI" id="CHEBI:16769"/>
        <dbReference type="ChEBI" id="CHEBI:58359"/>
        <dbReference type="ChEBI" id="CHEBI:65002"/>
        <dbReference type="ChEBI" id="CHEBI:65069"/>
        <dbReference type="EC" id="2.6.1.101"/>
    </reaction>
</comment>
<comment type="cofactor">
    <cofactor evidence="1">
        <name>pyridoxal 5'-phosphate</name>
        <dbReference type="ChEBI" id="CHEBI:597326"/>
    </cofactor>
</comment>
<comment type="pathway">
    <text>Metabolic intermediate biosynthesis; 2-deoxystreptamine biosynthesis; 2-deoxystreptamine from D-glucose 6-phosphate: step 4/4.</text>
</comment>
<comment type="pathway">
    <text>Antibiotic biosynthesis; kanamycin biosynthesis.</text>
</comment>
<comment type="similarity">
    <text evidence="2">Belongs to the DegT/DnrJ/EryC1 family. L-glutamine:2-deoxy-scyllo-inosose/scyllo-inosose aminotransferase subfamily.</text>
</comment>
<proteinExistence type="inferred from homology"/>
<protein>
    <recommendedName>
        <fullName>Putative L-glutamine:3-amino-2,3-dideoxy-scyllo-inosose aminotransferase</fullName>
        <shortName>Putative L-glutamine:amino-DOI aminotransferase</shortName>
        <ecNumber>2.6.1.101</ecNumber>
    </recommendedName>
</protein>
<reference key="1">
    <citation type="journal article" date="2004" name="Arch. Biochem. Biophys.">
        <title>A gene cluster for biosynthesis of kanamycin from Streptomyces kanamyceticus: comparison with gentamicin biosynthetic gene cluster.</title>
        <authorList>
            <person name="Kharel M.K."/>
            <person name="Subba B."/>
            <person name="Basnet D.B."/>
            <person name="Woo J.S."/>
            <person name="Lee H.C."/>
            <person name="Liou K."/>
            <person name="Sohng J.K."/>
        </authorList>
    </citation>
    <scope>NUCLEOTIDE SEQUENCE [GENOMIC DNA]</scope>
    <source>
        <strain>ATCC 12853 / DSM 40500 / NBRC 13414 / NCIMB 9343 / NRRL B-2535 / VKM Ac-837</strain>
    </source>
</reference>
<reference key="2">
    <citation type="journal article" date="2004" name="J. Antibiot.">
        <title>The kanamycin biosynthetic gene cluster from Streptomyces kanamyceticus.</title>
        <authorList>
            <person name="Yanai K."/>
            <person name="Murakami T."/>
        </authorList>
    </citation>
    <scope>NUCLEOTIDE SEQUENCE [GENOMIC DNA]</scope>
    <source>
        <strain>21-18</strain>
    </source>
</reference>
<reference key="3">
    <citation type="submission" date="2004-02" db="EMBL/GenBank/DDBJ databases">
        <title>Cloning and sequencing of the kanamycin biosynthetic gene cluster from Streptomyces kanamyceticus DSM 40500.</title>
        <authorList>
            <person name="Aboshanab K.M.A."/>
            <person name="Schmidt-Beissner H."/>
            <person name="Wehmeier U.F."/>
            <person name="Welzel K."/>
            <person name="Vente A."/>
            <person name="Piepersberg W."/>
        </authorList>
    </citation>
    <scope>NUCLEOTIDE SEQUENCE [GENOMIC DNA]</scope>
    <source>
        <strain>ATCC 12853 / DSM 40500 / NBRC 13414 / NCIMB 9343 / NRRL B-2535 / VKM Ac-837</strain>
    </source>
</reference>
<feature type="chain" id="PRO_0000234050" description="Putative L-glutamine:3-amino-2,3-dideoxy-scyllo-inosose aminotransferase">
    <location>
        <begin position="1"/>
        <end position="419"/>
    </location>
</feature>
<feature type="modified residue" description="N6-(pyridoxal phosphate)lysine" evidence="1">
    <location>
        <position position="199"/>
    </location>
</feature>
<name>GLADA_STRKN</name>
<sequence>MSKKLALFGGTPVRNEEFYDGPHIGPHDLDRLKSVLDSGNFGGIPFPNTHHTAFADLFTGKLGAPYGLMVSNGTISLSIALRALGVRAGDEVITTGYTWMGTAAAIVHINAVPVLVDIDPTTWCIDPAAVEAAITPRTKVIVPVHLGNQIADLDALRAIADKHGLAILEDTAHGHFAEWRGQCVGTHGDAGSFSFESSKIMTAGEGGFLVARDEDVYQRMMSLANCGRKEPGYDGFAGRTLGWNARASELQAAFMIGQVEQHDALHAKRAASAAKLTAGLAEIGGFTPVGNDDPRITRRQYYEVIYRFDPAAWEGLHRDEVLSAILAEGIELEGDAFYPPVHKSELFAVDAVHWPMIAERYGDRIGPDSVDLPVADRAAADESVWVHHALLTGDDKDLGDILEAVAKVRDNLRELHDAS</sequence>
<organism>
    <name type="scientific">Streptomyces kanamyceticus</name>
    <dbReference type="NCBI Taxonomy" id="1967"/>
    <lineage>
        <taxon>Bacteria</taxon>
        <taxon>Bacillati</taxon>
        <taxon>Actinomycetota</taxon>
        <taxon>Actinomycetes</taxon>
        <taxon>Kitasatosporales</taxon>
        <taxon>Streptomycetaceae</taxon>
        <taxon>Streptomyces</taxon>
    </lineage>
</organism>